<reference key="1">
    <citation type="journal article" date="2000" name="Nature">
        <title>DNA sequence of both chromosomes of the cholera pathogen Vibrio cholerae.</title>
        <authorList>
            <person name="Heidelberg J.F."/>
            <person name="Eisen J.A."/>
            <person name="Nelson W.C."/>
            <person name="Clayton R.A."/>
            <person name="Gwinn M.L."/>
            <person name="Dodson R.J."/>
            <person name="Haft D.H."/>
            <person name="Hickey E.K."/>
            <person name="Peterson J.D."/>
            <person name="Umayam L.A."/>
            <person name="Gill S.R."/>
            <person name="Nelson K.E."/>
            <person name="Read T.D."/>
            <person name="Tettelin H."/>
            <person name="Richardson D.L."/>
            <person name="Ermolaeva M.D."/>
            <person name="Vamathevan J.J."/>
            <person name="Bass S."/>
            <person name="Qin H."/>
            <person name="Dragoi I."/>
            <person name="Sellers P."/>
            <person name="McDonald L.A."/>
            <person name="Utterback T.R."/>
            <person name="Fleischmann R.D."/>
            <person name="Nierman W.C."/>
            <person name="White O."/>
            <person name="Salzberg S.L."/>
            <person name="Smith H.O."/>
            <person name="Colwell R.R."/>
            <person name="Mekalanos J.J."/>
            <person name="Venter J.C."/>
            <person name="Fraser C.M."/>
        </authorList>
    </citation>
    <scope>NUCLEOTIDE SEQUENCE [LARGE SCALE GENOMIC DNA]</scope>
    <source>
        <strain>ATCC 39315 / El Tor Inaba N16961</strain>
    </source>
</reference>
<accession>Q9KPV9</accession>
<name>Y2253_VIBCH</name>
<dbReference type="EC" id="3.4.24.-"/>
<dbReference type="EMBL" id="AE003852">
    <property type="protein sequence ID" value="AAF95397.1"/>
    <property type="molecule type" value="Genomic_DNA"/>
</dbReference>
<dbReference type="PIR" id="C82099">
    <property type="entry name" value="C82099"/>
</dbReference>
<dbReference type="RefSeq" id="NP_231884.1">
    <property type="nucleotide sequence ID" value="NC_002505.1"/>
</dbReference>
<dbReference type="SMR" id="Q9KPV9"/>
<dbReference type="STRING" id="243277.VC_2253"/>
<dbReference type="DNASU" id="2613175"/>
<dbReference type="EnsemblBacteria" id="AAF95397">
    <property type="protein sequence ID" value="AAF95397"/>
    <property type="gene ID" value="VC_2253"/>
</dbReference>
<dbReference type="KEGG" id="vch:VC_2253"/>
<dbReference type="PATRIC" id="fig|243277.26.peg.2149"/>
<dbReference type="eggNOG" id="COG0750">
    <property type="taxonomic scope" value="Bacteria"/>
</dbReference>
<dbReference type="HOGENOM" id="CLU_025778_0_2_6"/>
<dbReference type="Proteomes" id="UP000000584">
    <property type="component" value="Chromosome 1"/>
</dbReference>
<dbReference type="GO" id="GO:0005886">
    <property type="term" value="C:plasma membrane"/>
    <property type="evidence" value="ECO:0007669"/>
    <property type="project" value="UniProtKB-SubCell"/>
</dbReference>
<dbReference type="GO" id="GO:0046872">
    <property type="term" value="F:metal ion binding"/>
    <property type="evidence" value="ECO:0007669"/>
    <property type="project" value="UniProtKB-KW"/>
</dbReference>
<dbReference type="GO" id="GO:0004222">
    <property type="term" value="F:metalloendopeptidase activity"/>
    <property type="evidence" value="ECO:0007669"/>
    <property type="project" value="InterPro"/>
</dbReference>
<dbReference type="GO" id="GO:0006508">
    <property type="term" value="P:proteolysis"/>
    <property type="evidence" value="ECO:0007669"/>
    <property type="project" value="UniProtKB-KW"/>
</dbReference>
<dbReference type="CDD" id="cd23082">
    <property type="entry name" value="cpPDZ1_EcRseP-like"/>
    <property type="match status" value="1"/>
</dbReference>
<dbReference type="CDD" id="cd23083">
    <property type="entry name" value="cpPDZ2_EcRseP-like"/>
    <property type="match status" value="1"/>
</dbReference>
<dbReference type="CDD" id="cd06163">
    <property type="entry name" value="S2P-M50_PDZ_RseP-like"/>
    <property type="match status" value="2"/>
</dbReference>
<dbReference type="Gene3D" id="2.30.42.10">
    <property type="match status" value="2"/>
</dbReference>
<dbReference type="InterPro" id="IPR001478">
    <property type="entry name" value="PDZ"/>
</dbReference>
<dbReference type="InterPro" id="IPR041489">
    <property type="entry name" value="PDZ_6"/>
</dbReference>
<dbReference type="InterPro" id="IPR036034">
    <property type="entry name" value="PDZ_sf"/>
</dbReference>
<dbReference type="InterPro" id="IPR004387">
    <property type="entry name" value="Pept_M50_Zn"/>
</dbReference>
<dbReference type="InterPro" id="IPR008915">
    <property type="entry name" value="Peptidase_M50"/>
</dbReference>
<dbReference type="NCBIfam" id="NF008046">
    <property type="entry name" value="PRK10779.1"/>
    <property type="match status" value="1"/>
</dbReference>
<dbReference type="NCBIfam" id="TIGR00054">
    <property type="entry name" value="RIP metalloprotease RseP"/>
    <property type="match status" value="1"/>
</dbReference>
<dbReference type="PANTHER" id="PTHR42837:SF2">
    <property type="entry name" value="MEMBRANE METALLOPROTEASE ARASP2, CHLOROPLASTIC-RELATED"/>
    <property type="match status" value="1"/>
</dbReference>
<dbReference type="PANTHER" id="PTHR42837">
    <property type="entry name" value="REGULATOR OF SIGMA-E PROTEASE RSEP"/>
    <property type="match status" value="1"/>
</dbReference>
<dbReference type="Pfam" id="PF17820">
    <property type="entry name" value="PDZ_6"/>
    <property type="match status" value="1"/>
</dbReference>
<dbReference type="Pfam" id="PF02163">
    <property type="entry name" value="Peptidase_M50"/>
    <property type="match status" value="1"/>
</dbReference>
<dbReference type="SMART" id="SM00228">
    <property type="entry name" value="PDZ"/>
    <property type="match status" value="2"/>
</dbReference>
<dbReference type="SUPFAM" id="SSF50156">
    <property type="entry name" value="PDZ domain-like"/>
    <property type="match status" value="2"/>
</dbReference>
<dbReference type="PROSITE" id="PS50106">
    <property type="entry name" value="PDZ"/>
    <property type="match status" value="1"/>
</dbReference>
<dbReference type="PROSITE" id="PS00142">
    <property type="entry name" value="ZINC_PROTEASE"/>
    <property type="match status" value="1"/>
</dbReference>
<gene>
    <name type="ordered locus">VC_2253</name>
</gene>
<feature type="chain" id="PRO_0000088475" description="Putative zinc metalloprotease VC_2253">
    <location>
        <begin position="1"/>
        <end position="452"/>
    </location>
</feature>
<feature type="transmembrane region" description="Helical" evidence="2">
    <location>
        <begin position="98"/>
        <end position="120"/>
    </location>
</feature>
<feature type="transmembrane region" description="Helical" evidence="2">
    <location>
        <begin position="378"/>
        <end position="400"/>
    </location>
</feature>
<feature type="transmembrane region" description="Helical" evidence="2">
    <location>
        <begin position="428"/>
        <end position="447"/>
    </location>
</feature>
<feature type="domain" description="PDZ" evidence="3">
    <location>
        <begin position="197"/>
        <end position="292"/>
    </location>
</feature>
<feature type="active site" evidence="4">
    <location>
        <position position="23"/>
    </location>
</feature>
<feature type="binding site" evidence="4">
    <location>
        <position position="22"/>
    </location>
    <ligand>
        <name>Zn(2+)</name>
        <dbReference type="ChEBI" id="CHEBI:29105"/>
        <note>catalytic</note>
    </ligand>
</feature>
<feature type="binding site" evidence="4">
    <location>
        <position position="26"/>
    </location>
    <ligand>
        <name>Zn(2+)</name>
        <dbReference type="ChEBI" id="CHEBI:29105"/>
        <note>catalytic</note>
    </ligand>
</feature>
<organism>
    <name type="scientific">Vibrio cholerae serotype O1 (strain ATCC 39315 / El Tor Inaba N16961)</name>
    <dbReference type="NCBI Taxonomy" id="243277"/>
    <lineage>
        <taxon>Bacteria</taxon>
        <taxon>Pseudomonadati</taxon>
        <taxon>Pseudomonadota</taxon>
        <taxon>Gammaproteobacteria</taxon>
        <taxon>Vibrionales</taxon>
        <taxon>Vibrionaceae</taxon>
        <taxon>Vibrio</taxon>
    </lineage>
</organism>
<keyword id="KW-0997">Cell inner membrane</keyword>
<keyword id="KW-1003">Cell membrane</keyword>
<keyword id="KW-0378">Hydrolase</keyword>
<keyword id="KW-0472">Membrane</keyword>
<keyword id="KW-0479">Metal-binding</keyword>
<keyword id="KW-0482">Metalloprotease</keyword>
<keyword id="KW-0645">Protease</keyword>
<keyword id="KW-1185">Reference proteome</keyword>
<keyword id="KW-0812">Transmembrane</keyword>
<keyword id="KW-1133">Transmembrane helix</keyword>
<keyword id="KW-0862">Zinc</keyword>
<protein>
    <recommendedName>
        <fullName>Putative zinc metalloprotease VC_2253</fullName>
        <ecNumber>3.4.24.-</ecNumber>
    </recommendedName>
</protein>
<evidence type="ECO:0000250" key="1"/>
<evidence type="ECO:0000255" key="2"/>
<evidence type="ECO:0000255" key="3">
    <source>
        <dbReference type="PROSITE-ProRule" id="PRU00143"/>
    </source>
</evidence>
<evidence type="ECO:0000255" key="4">
    <source>
        <dbReference type="PROSITE-ProRule" id="PRU10095"/>
    </source>
</evidence>
<evidence type="ECO:0000305" key="5"/>
<sequence>MTDILWNFIAFIIALGILVAVHEFGHFWVARRCGVKVEKFSIGFGKSIWKRVGHDGTEYSISMIPLGGYVKMLDGRVDDVPAEQQAMAFDKQSLWKRSAIVSAGPIFNFLFAIFAYWLVFMIGVPAVKPVIGEVTPYSIAAQAGLEPGMEIKAVSGVNTPDWESVNMGLIGHIGDDSMTITVSSAEGVGLNEIKTINLRDWNFDPETESAMGALGFKPFTPEISNQLTNVSAQGAGERAGLQVGDTVLQINGQAVEAWQQVVNAIQSHPNAPIAVMVERAGQQVELTLIPDSRELSQGKVIGFAGIAPKVAEWPQNYRFELQFGVFESLGKAVEKSGQVIDLTVSMLKKLLVGDVGLNNLSGPISIAKGAGTTADYGFVYFLGFLALISINLGIINLVPLPMLDGGHLLFFMIEAVIRRPVPEKVQEMGYRIGGAIIFSLMAVAIFNDFTRL</sequence>
<comment type="cofactor">
    <cofactor evidence="5">
        <name>Zn(2+)</name>
        <dbReference type="ChEBI" id="CHEBI:29105"/>
    </cofactor>
</comment>
<comment type="subcellular location">
    <subcellularLocation>
        <location evidence="1">Cell inner membrane</location>
        <topology evidence="1">Multi-pass membrane protein</topology>
    </subcellularLocation>
</comment>
<comment type="similarity">
    <text evidence="5">Belongs to the peptidase M50B family.</text>
</comment>
<proteinExistence type="inferred from homology"/>